<gene>
    <name type="primary">trpC</name>
    <name type="ordered locus">ACIAD2463</name>
</gene>
<reference key="1">
    <citation type="journal article" date="1984" name="Mol. Biol. Evol.">
        <title>Nucleotide sequence of the Acinetobacter calcoaceticus trpGDC gene cluster.</title>
        <authorList>
            <person name="Kaplan J.B."/>
            <person name="Goncharoff P."/>
            <person name="Seibold A.M."/>
            <person name="Nichols B.P."/>
        </authorList>
    </citation>
    <scope>NUCLEOTIDE SEQUENCE [GENOMIC DNA]</scope>
</reference>
<reference key="2">
    <citation type="journal article" date="2004" name="Nucleic Acids Res.">
        <title>Unique features revealed by the genome sequence of Acinetobacter sp. ADP1, a versatile and naturally transformation competent bacterium.</title>
        <authorList>
            <person name="Barbe V."/>
            <person name="Vallenet D."/>
            <person name="Fonknechten N."/>
            <person name="Kreimeyer A."/>
            <person name="Oztas S."/>
            <person name="Labarre L."/>
            <person name="Cruveiller S."/>
            <person name="Robert C."/>
            <person name="Duprat S."/>
            <person name="Wincker P."/>
            <person name="Ornston L.N."/>
            <person name="Weissenbach J."/>
            <person name="Marliere P."/>
            <person name="Cohen G.N."/>
            <person name="Medigue C."/>
        </authorList>
    </citation>
    <scope>NUCLEOTIDE SEQUENCE [LARGE SCALE GENOMIC DNA]</scope>
    <source>
        <strain>ATCC 33305 / BD413 / ADP1</strain>
    </source>
</reference>
<organism>
    <name type="scientific">Acinetobacter baylyi (strain ATCC 33305 / BD413 / ADP1)</name>
    <dbReference type="NCBI Taxonomy" id="62977"/>
    <lineage>
        <taxon>Bacteria</taxon>
        <taxon>Pseudomonadati</taxon>
        <taxon>Pseudomonadota</taxon>
        <taxon>Gammaproteobacteria</taxon>
        <taxon>Moraxellales</taxon>
        <taxon>Moraxellaceae</taxon>
        <taxon>Acinetobacter</taxon>
    </lineage>
</organism>
<comment type="catalytic activity">
    <reaction>
        <text>1-(2-carboxyphenylamino)-1-deoxy-D-ribulose 5-phosphate + H(+) = (1S,2R)-1-C-(indol-3-yl)glycerol 3-phosphate + CO2 + H2O</text>
        <dbReference type="Rhea" id="RHEA:23476"/>
        <dbReference type="ChEBI" id="CHEBI:15377"/>
        <dbReference type="ChEBI" id="CHEBI:15378"/>
        <dbReference type="ChEBI" id="CHEBI:16526"/>
        <dbReference type="ChEBI" id="CHEBI:58613"/>
        <dbReference type="ChEBI" id="CHEBI:58866"/>
        <dbReference type="EC" id="4.1.1.48"/>
    </reaction>
</comment>
<comment type="pathway">
    <text>Amino-acid biosynthesis; L-tryptophan biosynthesis; L-tryptophan from chorismate: step 4/5.</text>
</comment>
<comment type="similarity">
    <text evidence="1">Belongs to the TrpC family.</text>
</comment>
<comment type="sequence caution" evidence="1">
    <conflict type="erroneous initiation">
        <sequence resource="EMBL-CDS" id="CAG69233"/>
    </conflict>
</comment>
<dbReference type="EC" id="4.1.1.48"/>
<dbReference type="EMBL" id="M36636">
    <property type="protein sequence ID" value="AAA21905.1"/>
    <property type="molecule type" value="Genomic_DNA"/>
</dbReference>
<dbReference type="EMBL" id="CR543861">
    <property type="protein sequence ID" value="CAG69233.1"/>
    <property type="status" value="ALT_INIT"/>
    <property type="molecule type" value="Genomic_DNA"/>
</dbReference>
<dbReference type="PIR" id="A01133">
    <property type="entry name" value="GWKECC"/>
</dbReference>
<dbReference type="RefSeq" id="WP_004928449.1">
    <property type="nucleotide sequence ID" value="NC_005966.1"/>
</dbReference>
<dbReference type="SMR" id="P00911"/>
<dbReference type="STRING" id="202950.GCA_001485005_01535"/>
<dbReference type="GeneID" id="45234768"/>
<dbReference type="KEGG" id="aci:ACIAD2463"/>
<dbReference type="eggNOG" id="COG0134">
    <property type="taxonomic scope" value="Bacteria"/>
</dbReference>
<dbReference type="HOGENOM" id="CLU_034247_2_0_6"/>
<dbReference type="OrthoDB" id="9804217at2"/>
<dbReference type="BioCyc" id="ASP62977:ACIAD_RS11255-MONOMER"/>
<dbReference type="UniPathway" id="UPA00035">
    <property type="reaction ID" value="UER00043"/>
</dbReference>
<dbReference type="Proteomes" id="UP000000430">
    <property type="component" value="Chromosome"/>
</dbReference>
<dbReference type="GO" id="GO:0004425">
    <property type="term" value="F:indole-3-glycerol-phosphate synthase activity"/>
    <property type="evidence" value="ECO:0007669"/>
    <property type="project" value="UniProtKB-UniRule"/>
</dbReference>
<dbReference type="GO" id="GO:0004640">
    <property type="term" value="F:phosphoribosylanthranilate isomerase activity"/>
    <property type="evidence" value="ECO:0007669"/>
    <property type="project" value="TreeGrafter"/>
</dbReference>
<dbReference type="GO" id="GO:0000162">
    <property type="term" value="P:L-tryptophan biosynthetic process"/>
    <property type="evidence" value="ECO:0007669"/>
    <property type="project" value="UniProtKB-UniRule"/>
</dbReference>
<dbReference type="CDD" id="cd00331">
    <property type="entry name" value="IGPS"/>
    <property type="match status" value="1"/>
</dbReference>
<dbReference type="FunFam" id="3.20.20.70:FF:000024">
    <property type="entry name" value="Indole-3-glycerol phosphate synthase"/>
    <property type="match status" value="1"/>
</dbReference>
<dbReference type="Gene3D" id="3.20.20.70">
    <property type="entry name" value="Aldolase class I"/>
    <property type="match status" value="1"/>
</dbReference>
<dbReference type="HAMAP" id="MF_00134_B">
    <property type="entry name" value="IGPS_B"/>
    <property type="match status" value="1"/>
</dbReference>
<dbReference type="InterPro" id="IPR013785">
    <property type="entry name" value="Aldolase_TIM"/>
</dbReference>
<dbReference type="InterPro" id="IPR045186">
    <property type="entry name" value="Indole-3-glycerol_P_synth"/>
</dbReference>
<dbReference type="InterPro" id="IPR013798">
    <property type="entry name" value="Indole-3-glycerol_P_synth_dom"/>
</dbReference>
<dbReference type="InterPro" id="IPR001468">
    <property type="entry name" value="Indole-3-GlycerolPSynthase_CS"/>
</dbReference>
<dbReference type="InterPro" id="IPR011060">
    <property type="entry name" value="RibuloseP-bd_barrel"/>
</dbReference>
<dbReference type="NCBIfam" id="NF001373">
    <property type="entry name" value="PRK00278.1-6"/>
    <property type="match status" value="1"/>
</dbReference>
<dbReference type="NCBIfam" id="NF001377">
    <property type="entry name" value="PRK00278.2-4"/>
    <property type="match status" value="1"/>
</dbReference>
<dbReference type="PANTHER" id="PTHR22854:SF2">
    <property type="entry name" value="INDOLE-3-GLYCEROL-PHOSPHATE SYNTHASE"/>
    <property type="match status" value="1"/>
</dbReference>
<dbReference type="PANTHER" id="PTHR22854">
    <property type="entry name" value="TRYPTOPHAN BIOSYNTHESIS PROTEIN"/>
    <property type="match status" value="1"/>
</dbReference>
<dbReference type="Pfam" id="PF00218">
    <property type="entry name" value="IGPS"/>
    <property type="match status" value="1"/>
</dbReference>
<dbReference type="SUPFAM" id="SSF51366">
    <property type="entry name" value="Ribulose-phoshate binding barrel"/>
    <property type="match status" value="1"/>
</dbReference>
<dbReference type="PROSITE" id="PS00614">
    <property type="entry name" value="IGPS"/>
    <property type="match status" value="1"/>
</dbReference>
<accession>P00911</accession>
<accession>Q6F9N1</accession>
<protein>
    <recommendedName>
        <fullName>Indole-3-glycerol phosphate synthase</fullName>
        <shortName>IGPS</shortName>
        <ecNumber>4.1.1.48</ecNumber>
    </recommendedName>
</protein>
<evidence type="ECO:0000305" key="1"/>
<proteinExistence type="inferred from homology"/>
<name>TRPC_ACIAD</name>
<keyword id="KW-0028">Amino-acid biosynthesis</keyword>
<keyword id="KW-0057">Aromatic amino acid biosynthesis</keyword>
<keyword id="KW-0210">Decarboxylase</keyword>
<keyword id="KW-0456">Lyase</keyword>
<keyword id="KW-0822">Tryptophan biosynthesis</keyword>
<feature type="chain" id="PRO_0000154205" description="Indole-3-glycerol phosphate synthase">
    <location>
        <begin position="1"/>
        <end position="268"/>
    </location>
</feature>
<feature type="sequence conflict" description="In Ref. 1; AAA21905." evidence="1" ref="1">
    <original>A</original>
    <variation>V</variation>
    <location>
        <position position="72"/>
    </location>
</feature>
<sequence length="268" mass="30189">MIQIQNTILGKIVDRKHEELADRLKQRNLKDVEQWVKEAPPVRGFAQSLRSKRPGVIAEIKKASPSKGVIRADFNPAEIAQQYEQAGAACLSVLTDVDFFQGADENIAIARQHCSLPALRKDFLIDPYNVVEARALQADCILLIVACLSDQQLEEMSKTAFEYDLDVLVEVHDEQELERALKLSEQCLLGVNNRNLKTFDVDLNTSLRLKKLLDPSRLLVTESGIATPQDVQLMQEHDIHSFLVGESFMKQPRPDQAFTELFGVPKLV</sequence>